<evidence type="ECO:0000255" key="1">
    <source>
        <dbReference type="HAMAP-Rule" id="MF_00019"/>
    </source>
</evidence>
<comment type="function">
    <text evidence="1">Catalyzes the reversible formation of acyl-phosphate (acyl-PO(4)) from acyl-[acyl-carrier-protein] (acyl-ACP). This enzyme utilizes acyl-ACP as fatty acyl donor, but not acyl-CoA.</text>
</comment>
<comment type="catalytic activity">
    <reaction evidence="1">
        <text>a fatty acyl-[ACP] + phosphate = an acyl phosphate + holo-[ACP]</text>
        <dbReference type="Rhea" id="RHEA:42292"/>
        <dbReference type="Rhea" id="RHEA-COMP:9685"/>
        <dbReference type="Rhea" id="RHEA-COMP:14125"/>
        <dbReference type="ChEBI" id="CHEBI:43474"/>
        <dbReference type="ChEBI" id="CHEBI:59918"/>
        <dbReference type="ChEBI" id="CHEBI:64479"/>
        <dbReference type="ChEBI" id="CHEBI:138651"/>
        <dbReference type="EC" id="2.3.1.274"/>
    </reaction>
</comment>
<comment type="pathway">
    <text evidence="1">Lipid metabolism; phospholipid metabolism.</text>
</comment>
<comment type="subunit">
    <text evidence="1">Homodimer. Probably interacts with PlsY.</text>
</comment>
<comment type="subcellular location">
    <subcellularLocation>
        <location evidence="1">Cytoplasm</location>
    </subcellularLocation>
    <text evidence="1">Associated with the membrane possibly through PlsY.</text>
</comment>
<comment type="similarity">
    <text evidence="1">Belongs to the PlsX family.</text>
</comment>
<feature type="chain" id="PRO_1000089926" description="Phosphate acyltransferase">
    <location>
        <begin position="1"/>
        <end position="350"/>
    </location>
</feature>
<organism>
    <name type="scientific">Phenylobacterium zucineum (strain HLK1)</name>
    <dbReference type="NCBI Taxonomy" id="450851"/>
    <lineage>
        <taxon>Bacteria</taxon>
        <taxon>Pseudomonadati</taxon>
        <taxon>Pseudomonadota</taxon>
        <taxon>Alphaproteobacteria</taxon>
        <taxon>Caulobacterales</taxon>
        <taxon>Caulobacteraceae</taxon>
        <taxon>Phenylobacterium</taxon>
    </lineage>
</organism>
<proteinExistence type="inferred from homology"/>
<keyword id="KW-0963">Cytoplasm</keyword>
<keyword id="KW-0444">Lipid biosynthesis</keyword>
<keyword id="KW-0443">Lipid metabolism</keyword>
<keyword id="KW-0594">Phospholipid biosynthesis</keyword>
<keyword id="KW-1208">Phospholipid metabolism</keyword>
<keyword id="KW-1185">Reference proteome</keyword>
<keyword id="KW-0808">Transferase</keyword>
<sequence length="350" mass="36679">MTQSLVISIDAMGGDHGPSVVVPAAARAARDLPHVRFLLHGDEAAVRAEVARCAGLAERTEVRHADRVIGMDEKPAQALRRGKGTSMWGAVEAIREGDAHVAVSAGNTGALMAISKLILRMSADLDRPALVASIPHAKGVTTFLDVGANVDCDAERLVEFAIMGEAYHRAAHGVAKPTVGLLNVGSEEMKGHEEVREANRILREGGFDLEYRGFVEGDDLTKGSVDVVVTDGFTGNVALKAMEGAARFMYGELRAALTAGPFSSLGALLARPSLLRFRERMSPPPAAPLLGLNGLVLKCHGGAGDREFAKAIRAAADVAQSGFASEIERNMRRLPAALSPAAPSPADGAA</sequence>
<protein>
    <recommendedName>
        <fullName evidence="1">Phosphate acyltransferase</fullName>
        <ecNumber evidence="1">2.3.1.274</ecNumber>
    </recommendedName>
    <alternativeName>
        <fullName evidence="1">Acyl-ACP phosphotransacylase</fullName>
    </alternativeName>
    <alternativeName>
        <fullName evidence="1">Acyl-[acyl-carrier-protein]--phosphate acyltransferase</fullName>
    </alternativeName>
    <alternativeName>
        <fullName evidence="1">Phosphate-acyl-ACP acyltransferase</fullName>
    </alternativeName>
</protein>
<name>PLSX_PHEZH</name>
<accession>B4RB20</accession>
<dbReference type="EC" id="2.3.1.274" evidence="1"/>
<dbReference type="EMBL" id="CP000747">
    <property type="protein sequence ID" value="ACG78071.1"/>
    <property type="molecule type" value="Genomic_DNA"/>
</dbReference>
<dbReference type="RefSeq" id="WP_012522213.1">
    <property type="nucleotide sequence ID" value="NC_011144.1"/>
</dbReference>
<dbReference type="SMR" id="B4RB20"/>
<dbReference type="STRING" id="450851.PHZ_c1660"/>
<dbReference type="KEGG" id="pzu:PHZ_c1660"/>
<dbReference type="eggNOG" id="COG0416">
    <property type="taxonomic scope" value="Bacteria"/>
</dbReference>
<dbReference type="HOGENOM" id="CLU_039379_1_0_5"/>
<dbReference type="OrthoDB" id="9806408at2"/>
<dbReference type="UniPathway" id="UPA00085"/>
<dbReference type="Proteomes" id="UP000001868">
    <property type="component" value="Chromosome"/>
</dbReference>
<dbReference type="GO" id="GO:0005737">
    <property type="term" value="C:cytoplasm"/>
    <property type="evidence" value="ECO:0007669"/>
    <property type="project" value="UniProtKB-SubCell"/>
</dbReference>
<dbReference type="GO" id="GO:0043811">
    <property type="term" value="F:phosphate:acyl-[acyl carrier protein] acyltransferase activity"/>
    <property type="evidence" value="ECO:0007669"/>
    <property type="project" value="UniProtKB-UniRule"/>
</dbReference>
<dbReference type="GO" id="GO:0006633">
    <property type="term" value="P:fatty acid biosynthetic process"/>
    <property type="evidence" value="ECO:0007669"/>
    <property type="project" value="UniProtKB-UniRule"/>
</dbReference>
<dbReference type="GO" id="GO:0008654">
    <property type="term" value="P:phospholipid biosynthetic process"/>
    <property type="evidence" value="ECO:0007669"/>
    <property type="project" value="UniProtKB-KW"/>
</dbReference>
<dbReference type="Gene3D" id="3.40.718.10">
    <property type="entry name" value="Isopropylmalate Dehydrogenase"/>
    <property type="match status" value="1"/>
</dbReference>
<dbReference type="HAMAP" id="MF_00019">
    <property type="entry name" value="PlsX"/>
    <property type="match status" value="1"/>
</dbReference>
<dbReference type="InterPro" id="IPR003664">
    <property type="entry name" value="FA_synthesis"/>
</dbReference>
<dbReference type="InterPro" id="IPR012281">
    <property type="entry name" value="Phospholipid_synth_PlsX-like"/>
</dbReference>
<dbReference type="NCBIfam" id="TIGR00182">
    <property type="entry name" value="plsX"/>
    <property type="match status" value="1"/>
</dbReference>
<dbReference type="PANTHER" id="PTHR30100">
    <property type="entry name" value="FATTY ACID/PHOSPHOLIPID SYNTHESIS PROTEIN PLSX"/>
    <property type="match status" value="1"/>
</dbReference>
<dbReference type="PANTHER" id="PTHR30100:SF1">
    <property type="entry name" value="PHOSPHATE ACYLTRANSFERASE"/>
    <property type="match status" value="1"/>
</dbReference>
<dbReference type="Pfam" id="PF02504">
    <property type="entry name" value="FA_synthesis"/>
    <property type="match status" value="1"/>
</dbReference>
<dbReference type="PIRSF" id="PIRSF002465">
    <property type="entry name" value="Phsphlp_syn_PlsX"/>
    <property type="match status" value="1"/>
</dbReference>
<dbReference type="SUPFAM" id="SSF53659">
    <property type="entry name" value="Isocitrate/Isopropylmalate dehydrogenase-like"/>
    <property type="match status" value="1"/>
</dbReference>
<gene>
    <name evidence="1" type="primary">plsX</name>
    <name type="ordered locus">PHZ_c1660</name>
</gene>
<reference key="1">
    <citation type="journal article" date="2008" name="BMC Genomics">
        <title>Complete genome of Phenylobacterium zucineum - a novel facultative intracellular bacterium isolated from human erythroleukemia cell line K562.</title>
        <authorList>
            <person name="Luo Y."/>
            <person name="Xu X."/>
            <person name="Ding Z."/>
            <person name="Liu Z."/>
            <person name="Zhang B."/>
            <person name="Yan Z."/>
            <person name="Sun J."/>
            <person name="Hu S."/>
            <person name="Hu X."/>
        </authorList>
    </citation>
    <scope>NUCLEOTIDE SEQUENCE [LARGE SCALE GENOMIC DNA]</scope>
    <source>
        <strain>HLK1</strain>
    </source>
</reference>